<gene>
    <name type="primary">rca</name>
    <name type="ordered locus">alr1533</name>
</gene>
<feature type="chain" id="PRO_0000216428" description="Ribulose bisphosphate carboxylase/oxygenase activase">
    <location>
        <begin position="1"/>
        <end position="414"/>
    </location>
</feature>
<feature type="region of interest" description="Disordered" evidence="3">
    <location>
        <begin position="296"/>
        <end position="326"/>
    </location>
</feature>
<feature type="compositionally biased region" description="Polar residues" evidence="3">
    <location>
        <begin position="311"/>
        <end position="326"/>
    </location>
</feature>
<feature type="binding site" evidence="2">
    <location>
        <begin position="37"/>
        <end position="44"/>
    </location>
    <ligand>
        <name>ATP</name>
        <dbReference type="ChEBI" id="CHEBI:30616"/>
    </ligand>
</feature>
<feature type="helix" evidence="6">
    <location>
        <begin position="7"/>
        <end position="19"/>
    </location>
</feature>
<feature type="strand" evidence="6">
    <location>
        <begin position="31"/>
        <end position="36"/>
    </location>
</feature>
<feature type="helix" evidence="6">
    <location>
        <begin position="43"/>
        <end position="54"/>
    </location>
</feature>
<feature type="strand" evidence="6">
    <location>
        <begin position="57"/>
        <end position="62"/>
    </location>
</feature>
<feature type="helix" evidence="6">
    <location>
        <begin position="63"/>
        <end position="67"/>
    </location>
</feature>
<feature type="helix" evidence="6">
    <location>
        <begin position="69"/>
        <end position="71"/>
    </location>
</feature>
<feature type="helix" evidence="6">
    <location>
        <begin position="74"/>
        <end position="92"/>
    </location>
</feature>
<feature type="strand" evidence="6">
    <location>
        <begin position="96"/>
        <end position="101"/>
    </location>
</feature>
<feature type="helix" evidence="6">
    <location>
        <begin position="108"/>
        <end position="110"/>
    </location>
</feature>
<feature type="helix" evidence="6">
    <location>
        <begin position="120"/>
        <end position="132"/>
    </location>
</feature>
<feature type="strand" evidence="7">
    <location>
        <begin position="140"/>
        <end position="142"/>
    </location>
</feature>
<feature type="strand" evidence="6">
    <location>
        <begin position="153"/>
        <end position="158"/>
    </location>
</feature>
<feature type="helix" evidence="6">
    <location>
        <begin position="162"/>
        <end position="164"/>
    </location>
</feature>
<feature type="helix" evidence="6">
    <location>
        <begin position="165"/>
        <end position="169"/>
    </location>
</feature>
<feature type="strand" evidence="6">
    <location>
        <begin position="172"/>
        <end position="177"/>
    </location>
</feature>
<feature type="helix" evidence="6">
    <location>
        <begin position="182"/>
        <end position="192"/>
    </location>
</feature>
<feature type="turn" evidence="6">
    <location>
        <begin position="193"/>
        <end position="197"/>
    </location>
</feature>
<feature type="helix" evidence="6">
    <location>
        <begin position="200"/>
        <end position="209"/>
    </location>
</feature>
<feature type="strand" evidence="7">
    <location>
        <begin position="210"/>
        <end position="212"/>
    </location>
</feature>
<feature type="helix" evidence="6">
    <location>
        <begin position="215"/>
        <end position="223"/>
    </location>
</feature>
<feature type="helix" evidence="6">
    <location>
        <begin position="224"/>
        <end position="226"/>
    </location>
</feature>
<feature type="helix" evidence="6">
    <location>
        <begin position="227"/>
        <end position="237"/>
    </location>
</feature>
<feature type="turn" evidence="6">
    <location>
        <begin position="239"/>
        <end position="241"/>
    </location>
</feature>
<feature type="helix" evidence="6">
    <location>
        <begin position="242"/>
        <end position="247"/>
    </location>
</feature>
<feature type="helix" evidence="6">
    <location>
        <begin position="263"/>
        <end position="274"/>
    </location>
</feature>
<feature type="helix" evidence="5">
    <location>
        <begin position="328"/>
        <end position="339"/>
    </location>
</feature>
<feature type="strand" evidence="5">
    <location>
        <begin position="343"/>
        <end position="349"/>
    </location>
</feature>
<feature type="helix" evidence="5">
    <location>
        <begin position="351"/>
        <end position="354"/>
    </location>
</feature>
<feature type="turn" evidence="5">
    <location>
        <begin position="355"/>
        <end position="357"/>
    </location>
</feature>
<feature type="strand" evidence="5">
    <location>
        <begin position="360"/>
        <end position="367"/>
    </location>
</feature>
<feature type="helix" evidence="5">
    <location>
        <begin position="370"/>
        <end position="383"/>
    </location>
</feature>
<feature type="turn" evidence="5">
    <location>
        <begin position="384"/>
        <end position="386"/>
    </location>
</feature>
<feature type="strand" evidence="5">
    <location>
        <begin position="387"/>
        <end position="395"/>
    </location>
</feature>
<feature type="turn" evidence="5">
    <location>
        <begin position="396"/>
        <end position="399"/>
    </location>
</feature>
<feature type="strand" evidence="5">
    <location>
        <begin position="400"/>
        <end position="408"/>
    </location>
</feature>
<name>RCA_NOSS1</name>
<proteinExistence type="evidence at protein level"/>
<organism>
    <name type="scientific">Nostoc sp. (strain PCC 7120 / SAG 25.82 / UTEX 2576)</name>
    <dbReference type="NCBI Taxonomy" id="103690"/>
    <lineage>
        <taxon>Bacteria</taxon>
        <taxon>Bacillati</taxon>
        <taxon>Cyanobacteriota</taxon>
        <taxon>Cyanophyceae</taxon>
        <taxon>Nostocales</taxon>
        <taxon>Nostocaceae</taxon>
        <taxon>Nostoc</taxon>
    </lineage>
</organism>
<keyword id="KW-0002">3D-structure</keyword>
<keyword id="KW-0067">ATP-binding</keyword>
<keyword id="KW-0547">Nucleotide-binding</keyword>
<keyword id="KW-1185">Reference proteome</keyword>
<dbReference type="EMBL" id="BA000019">
    <property type="protein sequence ID" value="BAB77899.1"/>
    <property type="molecule type" value="Genomic_DNA"/>
</dbReference>
<dbReference type="PIR" id="AG1997">
    <property type="entry name" value="AG1997"/>
</dbReference>
<dbReference type="RefSeq" id="WP_010995702.1">
    <property type="nucleotide sequence ID" value="NZ_RSCN01000022.1"/>
</dbReference>
<dbReference type="PDB" id="6HAS">
    <property type="method" value="X-ray"/>
    <property type="resolution" value="1.38 A"/>
    <property type="chains" value="A/B=325-414"/>
</dbReference>
<dbReference type="PDB" id="6Z1D">
    <property type="method" value="X-ray"/>
    <property type="resolution" value="2.71 A"/>
    <property type="chains" value="A/B=2-291"/>
</dbReference>
<dbReference type="PDB" id="6Z1E">
    <property type="method" value="X-ray"/>
    <property type="resolution" value="2.45 A"/>
    <property type="chains" value="A/B=2-291"/>
</dbReference>
<dbReference type="PDB" id="6Z1F">
    <property type="method" value="EM"/>
    <property type="resolution" value="2.86 A"/>
    <property type="chains" value="1/2/3/4/5/6=2-291"/>
</dbReference>
<dbReference type="PDB" id="6Z1G">
    <property type="method" value="EM"/>
    <property type="resolution" value="8.20 A"/>
    <property type="chains" value="A=325-414"/>
</dbReference>
<dbReference type="PDBsum" id="6HAS"/>
<dbReference type="PDBsum" id="6Z1D"/>
<dbReference type="PDBsum" id="6Z1E"/>
<dbReference type="PDBsum" id="6Z1F"/>
<dbReference type="PDBsum" id="6Z1G"/>
<dbReference type="EMDB" id="EMD-11028"/>
<dbReference type="EMDB" id="EMD-11029"/>
<dbReference type="SMR" id="P58555"/>
<dbReference type="STRING" id="103690.gene:10493546"/>
<dbReference type="KEGG" id="ana:alr1533"/>
<dbReference type="eggNOG" id="COG0464">
    <property type="taxonomic scope" value="Bacteria"/>
</dbReference>
<dbReference type="eggNOG" id="COG4451">
    <property type="taxonomic scope" value="Bacteria"/>
</dbReference>
<dbReference type="OrthoDB" id="2078596at2"/>
<dbReference type="CD-CODE" id="96C56C72">
    <property type="entry name" value="Synthetic Condensate 000354"/>
</dbReference>
<dbReference type="Proteomes" id="UP000002483">
    <property type="component" value="Chromosome"/>
</dbReference>
<dbReference type="GO" id="GO:0005524">
    <property type="term" value="F:ATP binding"/>
    <property type="evidence" value="ECO:0007669"/>
    <property type="project" value="UniProtKB-KW"/>
</dbReference>
<dbReference type="GO" id="GO:0016887">
    <property type="term" value="F:ATP hydrolysis activity"/>
    <property type="evidence" value="ECO:0007669"/>
    <property type="project" value="InterPro"/>
</dbReference>
<dbReference type="CDD" id="cd00307">
    <property type="entry name" value="RuBisCO_small_like"/>
    <property type="match status" value="1"/>
</dbReference>
<dbReference type="Gene3D" id="1.10.8.1070">
    <property type="match status" value="1"/>
</dbReference>
<dbReference type="Gene3D" id="3.40.50.300">
    <property type="entry name" value="P-loop containing nucleotide triphosphate hydrolases"/>
    <property type="match status" value="1"/>
</dbReference>
<dbReference type="Gene3D" id="3.30.190.10">
    <property type="entry name" value="Ribulose bisphosphate carboxylase, small subunit"/>
    <property type="match status" value="1"/>
</dbReference>
<dbReference type="InterPro" id="IPR003959">
    <property type="entry name" value="ATPase_AAA_core"/>
</dbReference>
<dbReference type="InterPro" id="IPR027417">
    <property type="entry name" value="P-loop_NTPase"/>
</dbReference>
<dbReference type="InterPro" id="IPR044960">
    <property type="entry name" value="RCA-like"/>
</dbReference>
<dbReference type="InterPro" id="IPR048571">
    <property type="entry name" value="RuBisCO_activase_AAA_helical"/>
</dbReference>
<dbReference type="InterPro" id="IPR000894">
    <property type="entry name" value="RuBisCO_ssu_dom"/>
</dbReference>
<dbReference type="InterPro" id="IPR036385">
    <property type="entry name" value="RuBisCO_ssu_sf"/>
</dbReference>
<dbReference type="PANTHER" id="PTHR32429">
    <property type="match status" value="1"/>
</dbReference>
<dbReference type="PANTHER" id="PTHR32429:SF11">
    <property type="entry name" value="RIBULOSE BISPHOSPHATE CARBOXYLASE_OXYGENASE ACTIVASE, CHLOROPLASTIC"/>
    <property type="match status" value="1"/>
</dbReference>
<dbReference type="Pfam" id="PF00004">
    <property type="entry name" value="AAA"/>
    <property type="match status" value="1"/>
</dbReference>
<dbReference type="Pfam" id="PF21228">
    <property type="entry name" value="RuBisCO_activase_AAA_helical"/>
    <property type="match status" value="1"/>
</dbReference>
<dbReference type="Pfam" id="PF00101">
    <property type="entry name" value="RuBisCO_small"/>
    <property type="match status" value="1"/>
</dbReference>
<dbReference type="SMART" id="SM00961">
    <property type="entry name" value="RuBisCO_small"/>
    <property type="match status" value="1"/>
</dbReference>
<dbReference type="SUPFAM" id="SSF52540">
    <property type="entry name" value="P-loop containing nucleoside triphosphate hydrolases"/>
    <property type="match status" value="1"/>
</dbReference>
<dbReference type="SUPFAM" id="SSF55239">
    <property type="entry name" value="RuBisCO, small subunit"/>
    <property type="match status" value="1"/>
</dbReference>
<comment type="function">
    <text evidence="1">Activation of RuBisCO (ribulose-1,5-bisohosphate carboxylase/oxygenase; EC 4.1.1.39) involves the ATP-dependent carboxylation of the epsilon-amino group of lysine leading to a carbamate structure.</text>
</comment>
<comment type="similarity">
    <text evidence="4">Belongs to the RuBisCO activase family.</text>
</comment>
<protein>
    <recommendedName>
        <fullName>Ribulose bisphosphate carboxylase/oxygenase activase</fullName>
        <shortName>RA</shortName>
        <shortName>RuBisCO activase</shortName>
    </recommendedName>
</protein>
<sequence>MSYYIAPRFLDKLAVHITKNFLNIPGVRVPLILGIHGRKGEGKTFQCELAFEKMGIEVTLISGGELESPDAGDPARLIRLRYRETAELIKVRGKMCVLMINDLDAGAGRFDEGTQYTVNTQLVNATLMNIADNPTDVQLPGSYDSNPIRRVPIIVTGNDFSTLYAPLIRDGRMEKFYWEPNRDDKVGIVGGIFAEDGLSQREIEQLVDTFPKQSIDFFSALRSRIYDIQIRDFIHKVGFERISLRVVNSLEAPPEFKKPDFSLAHLIESGNLVLGEQQRVDNSQLVDEYNRLNRGRGYQTAPPPEAPVIQPVNNSSHKQKTSNTHLSLETQEQIRQILSQGHKITFEHVDARRFRTGSWQSCGTLHIDAESDAISTLEACLVDYDGEYVRMVGIDPKGKRRVVETIIQRPNGKN</sequence>
<reference key="1">
    <citation type="journal article" date="2001" name="DNA Res.">
        <title>Complete genomic sequence of the filamentous nitrogen-fixing cyanobacterium Anabaena sp. strain PCC 7120.</title>
        <authorList>
            <person name="Kaneko T."/>
            <person name="Nakamura Y."/>
            <person name="Wolk C.P."/>
            <person name="Kuritz T."/>
            <person name="Sasamoto S."/>
            <person name="Watanabe A."/>
            <person name="Iriguchi M."/>
            <person name="Ishikawa A."/>
            <person name="Kawashima K."/>
            <person name="Kimura T."/>
            <person name="Kishida Y."/>
            <person name="Kohara M."/>
            <person name="Matsumoto M."/>
            <person name="Matsuno A."/>
            <person name="Muraki A."/>
            <person name="Nakazaki N."/>
            <person name="Shimpo S."/>
            <person name="Sugimoto M."/>
            <person name="Takazawa M."/>
            <person name="Yamada M."/>
            <person name="Yasuda M."/>
            <person name="Tabata S."/>
        </authorList>
    </citation>
    <scope>NUCLEOTIDE SEQUENCE [LARGE SCALE GENOMIC DNA]</scope>
    <source>
        <strain>PCC 7120 / SAG 25.82 / UTEX 2576</strain>
    </source>
</reference>
<accession>P58555</accession>
<evidence type="ECO:0000250" key="1"/>
<evidence type="ECO:0000255" key="2"/>
<evidence type="ECO:0000256" key="3">
    <source>
        <dbReference type="SAM" id="MobiDB-lite"/>
    </source>
</evidence>
<evidence type="ECO:0000305" key="4"/>
<evidence type="ECO:0007829" key="5">
    <source>
        <dbReference type="PDB" id="6HAS"/>
    </source>
</evidence>
<evidence type="ECO:0007829" key="6">
    <source>
        <dbReference type="PDB" id="6Z1E"/>
    </source>
</evidence>
<evidence type="ECO:0007829" key="7">
    <source>
        <dbReference type="PDB" id="6Z1F"/>
    </source>
</evidence>